<gene>
    <name evidence="1" type="primary">wdfy-2</name>
    <name type="ORF">CBG20231</name>
</gene>
<reference key="1">
    <citation type="journal article" date="2003" name="PLoS Biol.">
        <title>The genome sequence of Caenorhabditis briggsae: a platform for comparative genomics.</title>
        <authorList>
            <person name="Stein L.D."/>
            <person name="Bao Z."/>
            <person name="Blasiar D."/>
            <person name="Blumenthal T."/>
            <person name="Brent M.R."/>
            <person name="Chen N."/>
            <person name="Chinwalla A."/>
            <person name="Clarke L."/>
            <person name="Clee C."/>
            <person name="Coghlan A."/>
            <person name="Coulson A."/>
            <person name="D'Eustachio P."/>
            <person name="Fitch D.H.A."/>
            <person name="Fulton L.A."/>
            <person name="Fulton R.E."/>
            <person name="Griffiths-Jones S."/>
            <person name="Harris T.W."/>
            <person name="Hillier L.W."/>
            <person name="Kamath R."/>
            <person name="Kuwabara P.E."/>
            <person name="Mardis E.R."/>
            <person name="Marra M.A."/>
            <person name="Miner T.L."/>
            <person name="Minx P."/>
            <person name="Mullikin J.C."/>
            <person name="Plumb R.W."/>
            <person name="Rogers J."/>
            <person name="Schein J.E."/>
            <person name="Sohrmann M."/>
            <person name="Spieth J."/>
            <person name="Stajich J.E."/>
            <person name="Wei C."/>
            <person name="Willey D."/>
            <person name="Wilson R.K."/>
            <person name="Durbin R.M."/>
            <person name="Waterston R.H."/>
        </authorList>
    </citation>
    <scope>NUCLEOTIDE SEQUENCE [LARGE SCALE GENOMIC DNA]</scope>
    <source>
        <strain>AF16</strain>
    </source>
</reference>
<evidence type="ECO:0000250" key="1">
    <source>
        <dbReference type="UniProtKB" id="Q18964"/>
    </source>
</evidence>
<evidence type="ECO:0000255" key="2"/>
<evidence type="ECO:0000255" key="3">
    <source>
        <dbReference type="PROSITE-ProRule" id="PRU00091"/>
    </source>
</evidence>
<comment type="function">
    <text evidence="1">Plays a role in coelomocyte endocytosis.</text>
</comment>
<keyword id="KW-0254">Endocytosis</keyword>
<keyword id="KW-0479">Metal-binding</keyword>
<keyword id="KW-1185">Reference proteome</keyword>
<keyword id="KW-0677">Repeat</keyword>
<keyword id="KW-0853">WD repeat</keyword>
<keyword id="KW-0862">Zinc</keyword>
<keyword id="KW-0863">Zinc-finger</keyword>
<organism>
    <name type="scientific">Caenorhabditis briggsae</name>
    <dbReference type="NCBI Taxonomy" id="6238"/>
    <lineage>
        <taxon>Eukaryota</taxon>
        <taxon>Metazoa</taxon>
        <taxon>Ecdysozoa</taxon>
        <taxon>Nematoda</taxon>
        <taxon>Chromadorea</taxon>
        <taxon>Rhabditida</taxon>
        <taxon>Rhabditina</taxon>
        <taxon>Rhabditomorpha</taxon>
        <taxon>Rhabditoidea</taxon>
        <taxon>Rhabditidae</taxon>
        <taxon>Peloderinae</taxon>
        <taxon>Caenorhabditis</taxon>
    </lineage>
</organism>
<accession>A8XXC7</accession>
<name>WDFY2_CAEBR</name>
<protein>
    <recommendedName>
        <fullName evidence="1">WD repeat and FYVE domain-containing protein 2</fullName>
    </recommendedName>
</protein>
<sequence>MAAIINQRVDQGESSMGGAKPTLLHKIAGHVARINDVILLSKDEGVWTASDDRSVRLYLKRDNDQFWPSIHHFMPVAPTCLFYSEETYKLLVGLINGNVYEFNVADDFNSMTESRKWTCHAGPISGLGFALSSELIFSCSRDKSIVWHCSENSNKVGSYLLENSCTAMVIDLPFVFVGDHGGHVTVLRIIDNQPNLVSKLSAHTNSITSLTWDGNKKVLYSGSSDHLIIMWDIGGGKGEAYELNGHNGKVTTLCAAPAAKRLFSADEHGKLMCWDMDVRRVETPEWKTSDCCQKCNQPFFWNLQAMWQRKVVGLRQHHCRTCGSAVCGSCCDNWTTYPPMGYETKVRICNDCAGRMKENPGNFDLTPLAIPHEIRTGITAMHLQETLGLLVTSGQNRVVMIWDVRSVCSAPSGSGGH</sequence>
<proteinExistence type="inferred from homology"/>
<feature type="chain" id="PRO_0000356226" description="WD repeat and FYVE domain-containing protein 2">
    <location>
        <begin position="1"/>
        <end position="417"/>
    </location>
</feature>
<feature type="repeat" description="WD 1" evidence="2">
    <location>
        <begin position="29"/>
        <end position="68"/>
    </location>
</feature>
<feature type="repeat" description="WD 2" evidence="2">
    <location>
        <begin position="119"/>
        <end position="157"/>
    </location>
</feature>
<feature type="repeat" description="WD 3" evidence="2">
    <location>
        <begin position="202"/>
        <end position="241"/>
    </location>
</feature>
<feature type="repeat" description="WD 4" evidence="2">
    <location>
        <begin position="245"/>
        <end position="284"/>
    </location>
</feature>
<feature type="repeat" description="WD 5" evidence="2">
    <location>
        <begin position="373"/>
        <end position="412"/>
    </location>
</feature>
<feature type="zinc finger region" description="FYVE-type" evidence="3">
    <location>
        <begin position="286"/>
        <end position="357"/>
    </location>
</feature>
<feature type="binding site" evidence="3">
    <location>
        <position position="292"/>
    </location>
    <ligand>
        <name>Zn(2+)</name>
        <dbReference type="ChEBI" id="CHEBI:29105"/>
        <label>1</label>
    </ligand>
</feature>
<feature type="binding site" evidence="3">
    <location>
        <position position="295"/>
    </location>
    <ligand>
        <name>Zn(2+)</name>
        <dbReference type="ChEBI" id="CHEBI:29105"/>
        <label>1</label>
    </ligand>
</feature>
<feature type="binding site" evidence="3">
    <location>
        <position position="319"/>
    </location>
    <ligand>
        <name>Zn(2+)</name>
        <dbReference type="ChEBI" id="CHEBI:29105"/>
        <label>2</label>
    </ligand>
</feature>
<feature type="binding site" evidence="3">
    <location>
        <position position="322"/>
    </location>
    <ligand>
        <name>Zn(2+)</name>
        <dbReference type="ChEBI" id="CHEBI:29105"/>
        <label>2</label>
    </ligand>
</feature>
<feature type="binding site" evidence="3">
    <location>
        <position position="327"/>
    </location>
    <ligand>
        <name>Zn(2+)</name>
        <dbReference type="ChEBI" id="CHEBI:29105"/>
        <label>1</label>
    </ligand>
</feature>
<feature type="binding site" evidence="3">
    <location>
        <position position="330"/>
    </location>
    <ligand>
        <name>Zn(2+)</name>
        <dbReference type="ChEBI" id="CHEBI:29105"/>
        <label>1</label>
    </ligand>
</feature>
<feature type="binding site" evidence="3">
    <location>
        <position position="349"/>
    </location>
    <ligand>
        <name>Zn(2+)</name>
        <dbReference type="ChEBI" id="CHEBI:29105"/>
        <label>2</label>
    </ligand>
</feature>
<feature type="binding site" evidence="3">
    <location>
        <position position="352"/>
    </location>
    <ligand>
        <name>Zn(2+)</name>
        <dbReference type="ChEBI" id="CHEBI:29105"/>
        <label>2</label>
    </ligand>
</feature>
<dbReference type="EMBL" id="HE601386">
    <property type="protein sequence ID" value="CAP37296.2"/>
    <property type="molecule type" value="Genomic_DNA"/>
</dbReference>
<dbReference type="SMR" id="A8XXC7"/>
<dbReference type="FunCoup" id="A8XXC7">
    <property type="interactions" value="2702"/>
</dbReference>
<dbReference type="STRING" id="6238.A8XXC7"/>
<dbReference type="EnsemblMetazoa" id="CBG20231.1">
    <property type="protein sequence ID" value="CBG20231.1"/>
    <property type="gene ID" value="WBGene00039267"/>
</dbReference>
<dbReference type="WormBase" id="CBG20231">
    <property type="protein sequence ID" value="CBP29678"/>
    <property type="gene ID" value="WBGene00039267"/>
    <property type="gene designation" value="Cbr-wdfy-2"/>
</dbReference>
<dbReference type="eggNOG" id="KOG1409">
    <property type="taxonomic scope" value="Eukaryota"/>
</dbReference>
<dbReference type="HOGENOM" id="CLU_046919_0_0_1"/>
<dbReference type="InParanoid" id="A8XXC7"/>
<dbReference type="OMA" id="EIRCLRW"/>
<dbReference type="OrthoDB" id="63070at2759"/>
<dbReference type="Proteomes" id="UP000008549">
    <property type="component" value="Unassembled WGS sequence"/>
</dbReference>
<dbReference type="GO" id="GO:0005769">
    <property type="term" value="C:early endosome"/>
    <property type="evidence" value="ECO:0000318"/>
    <property type="project" value="GO_Central"/>
</dbReference>
<dbReference type="GO" id="GO:0008270">
    <property type="term" value="F:zinc ion binding"/>
    <property type="evidence" value="ECO:0007669"/>
    <property type="project" value="UniProtKB-KW"/>
</dbReference>
<dbReference type="GO" id="GO:0006897">
    <property type="term" value="P:endocytosis"/>
    <property type="evidence" value="ECO:0007669"/>
    <property type="project" value="UniProtKB-KW"/>
</dbReference>
<dbReference type="CDD" id="cd15718">
    <property type="entry name" value="FYVE_WDFY1_like"/>
    <property type="match status" value="1"/>
</dbReference>
<dbReference type="FunFam" id="2.130.10.10:FF:002135">
    <property type="entry name" value="WD repeat and FYVE domain-containing protein 2"/>
    <property type="match status" value="1"/>
</dbReference>
<dbReference type="FunFam" id="3.30.40.10:FF:000105">
    <property type="entry name" value="WD repeat and FYVE domain-containing protein 2"/>
    <property type="match status" value="1"/>
</dbReference>
<dbReference type="Gene3D" id="2.130.10.10">
    <property type="entry name" value="YVTN repeat-like/Quinoprotein amine dehydrogenase"/>
    <property type="match status" value="2"/>
</dbReference>
<dbReference type="Gene3D" id="3.30.40.10">
    <property type="entry name" value="Zinc/RING finger domain, C3HC4 (zinc finger)"/>
    <property type="match status" value="1"/>
</dbReference>
<dbReference type="InterPro" id="IPR015943">
    <property type="entry name" value="WD40/YVTN_repeat-like_dom_sf"/>
</dbReference>
<dbReference type="InterPro" id="IPR019775">
    <property type="entry name" value="WD40_repeat_CS"/>
</dbReference>
<dbReference type="InterPro" id="IPR036322">
    <property type="entry name" value="WD40_repeat_dom_sf"/>
</dbReference>
<dbReference type="InterPro" id="IPR001680">
    <property type="entry name" value="WD40_rpt"/>
</dbReference>
<dbReference type="InterPro" id="IPR042234">
    <property type="entry name" value="WDFY1/WDFY2"/>
</dbReference>
<dbReference type="InterPro" id="IPR000306">
    <property type="entry name" value="Znf_FYVE"/>
</dbReference>
<dbReference type="InterPro" id="IPR017455">
    <property type="entry name" value="Znf_FYVE-rel"/>
</dbReference>
<dbReference type="InterPro" id="IPR011011">
    <property type="entry name" value="Znf_FYVE_PHD"/>
</dbReference>
<dbReference type="InterPro" id="IPR013083">
    <property type="entry name" value="Znf_RING/FYVE/PHD"/>
</dbReference>
<dbReference type="PANTHER" id="PTHR46189">
    <property type="entry name" value="LD41958P"/>
    <property type="match status" value="1"/>
</dbReference>
<dbReference type="PANTHER" id="PTHR46189:SF1">
    <property type="entry name" value="LD41958P"/>
    <property type="match status" value="1"/>
</dbReference>
<dbReference type="Pfam" id="PF01363">
    <property type="entry name" value="FYVE"/>
    <property type="match status" value="1"/>
</dbReference>
<dbReference type="Pfam" id="PF00400">
    <property type="entry name" value="WD40"/>
    <property type="match status" value="3"/>
</dbReference>
<dbReference type="SMART" id="SM00064">
    <property type="entry name" value="FYVE"/>
    <property type="match status" value="1"/>
</dbReference>
<dbReference type="SMART" id="SM00320">
    <property type="entry name" value="WD40"/>
    <property type="match status" value="5"/>
</dbReference>
<dbReference type="SUPFAM" id="SSF57903">
    <property type="entry name" value="FYVE/PHD zinc finger"/>
    <property type="match status" value="1"/>
</dbReference>
<dbReference type="SUPFAM" id="SSF50978">
    <property type="entry name" value="WD40 repeat-like"/>
    <property type="match status" value="1"/>
</dbReference>
<dbReference type="PROSITE" id="PS00678">
    <property type="entry name" value="WD_REPEATS_1"/>
    <property type="match status" value="2"/>
</dbReference>
<dbReference type="PROSITE" id="PS50082">
    <property type="entry name" value="WD_REPEATS_2"/>
    <property type="match status" value="2"/>
</dbReference>
<dbReference type="PROSITE" id="PS50294">
    <property type="entry name" value="WD_REPEATS_REGION"/>
    <property type="match status" value="1"/>
</dbReference>
<dbReference type="PROSITE" id="PS50178">
    <property type="entry name" value="ZF_FYVE"/>
    <property type="match status" value="1"/>
</dbReference>